<keyword id="KW-1185">Reference proteome</keyword>
<keyword id="KW-0687">Ribonucleoprotein</keyword>
<keyword id="KW-0689">Ribosomal protein</keyword>
<keyword id="KW-0694">RNA-binding</keyword>
<keyword id="KW-0699">rRNA-binding</keyword>
<dbReference type="EMBL" id="CP001037">
    <property type="protein sequence ID" value="ACC82760.1"/>
    <property type="molecule type" value="Genomic_DNA"/>
</dbReference>
<dbReference type="RefSeq" id="WP_012410722.1">
    <property type="nucleotide sequence ID" value="NC_010628.1"/>
</dbReference>
<dbReference type="SMR" id="B2ITQ2"/>
<dbReference type="STRING" id="63737.Npun_R4387"/>
<dbReference type="EnsemblBacteria" id="ACC82760">
    <property type="protein sequence ID" value="ACC82760"/>
    <property type="gene ID" value="Npun_R4387"/>
</dbReference>
<dbReference type="KEGG" id="npu:Npun_R4387"/>
<dbReference type="eggNOG" id="COG0090">
    <property type="taxonomic scope" value="Bacteria"/>
</dbReference>
<dbReference type="HOGENOM" id="CLU_036235_2_1_3"/>
<dbReference type="OrthoDB" id="9778722at2"/>
<dbReference type="PhylomeDB" id="B2ITQ2"/>
<dbReference type="Proteomes" id="UP000001191">
    <property type="component" value="Chromosome"/>
</dbReference>
<dbReference type="GO" id="GO:0015934">
    <property type="term" value="C:large ribosomal subunit"/>
    <property type="evidence" value="ECO:0007669"/>
    <property type="project" value="InterPro"/>
</dbReference>
<dbReference type="GO" id="GO:0019843">
    <property type="term" value="F:rRNA binding"/>
    <property type="evidence" value="ECO:0007669"/>
    <property type="project" value="UniProtKB-UniRule"/>
</dbReference>
<dbReference type="GO" id="GO:0003735">
    <property type="term" value="F:structural constituent of ribosome"/>
    <property type="evidence" value="ECO:0007669"/>
    <property type="project" value="InterPro"/>
</dbReference>
<dbReference type="GO" id="GO:0016740">
    <property type="term" value="F:transferase activity"/>
    <property type="evidence" value="ECO:0007669"/>
    <property type="project" value="InterPro"/>
</dbReference>
<dbReference type="GO" id="GO:0006412">
    <property type="term" value="P:translation"/>
    <property type="evidence" value="ECO:0007669"/>
    <property type="project" value="UniProtKB-UniRule"/>
</dbReference>
<dbReference type="FunFam" id="2.30.30.30:FF:000001">
    <property type="entry name" value="50S ribosomal protein L2"/>
    <property type="match status" value="1"/>
</dbReference>
<dbReference type="FunFam" id="2.40.50.140:FF:000003">
    <property type="entry name" value="50S ribosomal protein L2"/>
    <property type="match status" value="1"/>
</dbReference>
<dbReference type="FunFam" id="4.10.950.10:FF:000001">
    <property type="entry name" value="50S ribosomal protein L2"/>
    <property type="match status" value="1"/>
</dbReference>
<dbReference type="Gene3D" id="2.30.30.30">
    <property type="match status" value="1"/>
</dbReference>
<dbReference type="Gene3D" id="2.40.50.140">
    <property type="entry name" value="Nucleic acid-binding proteins"/>
    <property type="match status" value="1"/>
</dbReference>
<dbReference type="Gene3D" id="4.10.950.10">
    <property type="entry name" value="Ribosomal protein L2, domain 3"/>
    <property type="match status" value="1"/>
</dbReference>
<dbReference type="HAMAP" id="MF_01320_B">
    <property type="entry name" value="Ribosomal_uL2_B"/>
    <property type="match status" value="1"/>
</dbReference>
<dbReference type="InterPro" id="IPR012340">
    <property type="entry name" value="NA-bd_OB-fold"/>
</dbReference>
<dbReference type="InterPro" id="IPR014722">
    <property type="entry name" value="Rib_uL2_dom2"/>
</dbReference>
<dbReference type="InterPro" id="IPR002171">
    <property type="entry name" value="Ribosomal_uL2"/>
</dbReference>
<dbReference type="InterPro" id="IPR005880">
    <property type="entry name" value="Ribosomal_uL2_bac/org-type"/>
</dbReference>
<dbReference type="InterPro" id="IPR022669">
    <property type="entry name" value="Ribosomal_uL2_C"/>
</dbReference>
<dbReference type="InterPro" id="IPR022671">
    <property type="entry name" value="Ribosomal_uL2_CS"/>
</dbReference>
<dbReference type="InterPro" id="IPR014726">
    <property type="entry name" value="Ribosomal_uL2_dom3"/>
</dbReference>
<dbReference type="InterPro" id="IPR022666">
    <property type="entry name" value="Ribosomal_uL2_RNA-bd_dom"/>
</dbReference>
<dbReference type="InterPro" id="IPR008991">
    <property type="entry name" value="Translation_prot_SH3-like_sf"/>
</dbReference>
<dbReference type="NCBIfam" id="TIGR01171">
    <property type="entry name" value="rplB_bact"/>
    <property type="match status" value="1"/>
</dbReference>
<dbReference type="PANTHER" id="PTHR13691:SF5">
    <property type="entry name" value="LARGE RIBOSOMAL SUBUNIT PROTEIN UL2M"/>
    <property type="match status" value="1"/>
</dbReference>
<dbReference type="PANTHER" id="PTHR13691">
    <property type="entry name" value="RIBOSOMAL PROTEIN L2"/>
    <property type="match status" value="1"/>
</dbReference>
<dbReference type="Pfam" id="PF00181">
    <property type="entry name" value="Ribosomal_L2"/>
    <property type="match status" value="1"/>
</dbReference>
<dbReference type="Pfam" id="PF03947">
    <property type="entry name" value="Ribosomal_L2_C"/>
    <property type="match status" value="1"/>
</dbReference>
<dbReference type="PIRSF" id="PIRSF002158">
    <property type="entry name" value="Ribosomal_L2"/>
    <property type="match status" value="1"/>
</dbReference>
<dbReference type="SMART" id="SM01383">
    <property type="entry name" value="Ribosomal_L2"/>
    <property type="match status" value="1"/>
</dbReference>
<dbReference type="SMART" id="SM01382">
    <property type="entry name" value="Ribosomal_L2_C"/>
    <property type="match status" value="1"/>
</dbReference>
<dbReference type="SUPFAM" id="SSF50249">
    <property type="entry name" value="Nucleic acid-binding proteins"/>
    <property type="match status" value="1"/>
</dbReference>
<dbReference type="SUPFAM" id="SSF50104">
    <property type="entry name" value="Translation proteins SH3-like domain"/>
    <property type="match status" value="1"/>
</dbReference>
<dbReference type="PROSITE" id="PS00467">
    <property type="entry name" value="RIBOSOMAL_L2"/>
    <property type="match status" value="1"/>
</dbReference>
<accession>B2ITQ2</accession>
<gene>
    <name evidence="1" type="primary">rplB</name>
    <name evidence="1" type="synonym">rpl2</name>
    <name type="ordered locus">Npun_R4387</name>
</gene>
<evidence type="ECO:0000255" key="1">
    <source>
        <dbReference type="HAMAP-Rule" id="MF_01320"/>
    </source>
</evidence>
<evidence type="ECO:0000256" key="2">
    <source>
        <dbReference type="SAM" id="MobiDB-lite"/>
    </source>
</evidence>
<evidence type="ECO:0000305" key="3"/>
<sequence>MGTRSYRPYTPSTRQVTVSDFAEITKTEPEKSLTTSKHRAKGRNNTGRITSRRRGGGHKQLYRIIDFKRDKHNIPAKVAAIEYDPNRNARIALLYYQDGEKRYILHPNGLKVGTIIISGPESPFEDGNALPLSRIPLGTSVHNVEMTPGKGGQIVRAAGASAQVVAKEGDYVTLKLPSGEVRLIRRDCYATIGQVGNTDARNLSAGKAGRNRWKGRRPKVRGSVMNPVDHPHGGGEGRAPIGRSGPVTPWGKPTLGAKTRNRKKLSSKFIVRRRRKSSKRGRGGRES</sequence>
<organism>
    <name type="scientific">Nostoc punctiforme (strain ATCC 29133 / PCC 73102)</name>
    <dbReference type="NCBI Taxonomy" id="63737"/>
    <lineage>
        <taxon>Bacteria</taxon>
        <taxon>Bacillati</taxon>
        <taxon>Cyanobacteriota</taxon>
        <taxon>Cyanophyceae</taxon>
        <taxon>Nostocales</taxon>
        <taxon>Nostocaceae</taxon>
        <taxon>Nostoc</taxon>
    </lineage>
</organism>
<proteinExistence type="inferred from homology"/>
<name>RL2_NOSP7</name>
<comment type="function">
    <text evidence="1">One of the primary rRNA binding proteins. Required for association of the 30S and 50S subunits to form the 70S ribosome, for tRNA binding and peptide bond formation. It has been suggested to have peptidyltransferase activity; this is somewhat controversial. Makes several contacts with the 16S rRNA in the 70S ribosome.</text>
</comment>
<comment type="subunit">
    <text evidence="1">Part of the 50S ribosomal subunit. Forms a bridge to the 30S subunit in the 70S ribosome.</text>
</comment>
<comment type="similarity">
    <text evidence="1">Belongs to the universal ribosomal protein uL2 family.</text>
</comment>
<feature type="chain" id="PRO_1000141588" description="Large ribosomal subunit protein uL2">
    <location>
        <begin position="1"/>
        <end position="287"/>
    </location>
</feature>
<feature type="region of interest" description="Disordered" evidence="2">
    <location>
        <begin position="25"/>
        <end position="57"/>
    </location>
</feature>
<feature type="region of interest" description="Disordered" evidence="2">
    <location>
        <begin position="203"/>
        <end position="287"/>
    </location>
</feature>
<feature type="compositionally biased region" description="Basic residues" evidence="2">
    <location>
        <begin position="209"/>
        <end position="220"/>
    </location>
</feature>
<feature type="compositionally biased region" description="Basic residues" evidence="2">
    <location>
        <begin position="259"/>
        <end position="287"/>
    </location>
</feature>
<reference key="1">
    <citation type="journal article" date="2013" name="Plant Physiol.">
        <title>A Nostoc punctiforme Sugar Transporter Necessary to Establish a Cyanobacterium-Plant Symbiosis.</title>
        <authorList>
            <person name="Ekman M."/>
            <person name="Picossi S."/>
            <person name="Campbell E.L."/>
            <person name="Meeks J.C."/>
            <person name="Flores E."/>
        </authorList>
    </citation>
    <scope>NUCLEOTIDE SEQUENCE [LARGE SCALE GENOMIC DNA]</scope>
    <source>
        <strain>ATCC 29133 / PCC 73102</strain>
    </source>
</reference>
<protein>
    <recommendedName>
        <fullName evidence="1">Large ribosomal subunit protein uL2</fullName>
    </recommendedName>
    <alternativeName>
        <fullName evidence="3">50S ribosomal protein L2</fullName>
    </alternativeName>
</protein>